<keyword id="KW-0413">Isomerase</keyword>
<keyword id="KW-1185">Reference proteome</keyword>
<keyword id="KW-0819">tRNA processing</keyword>
<gene>
    <name evidence="1" type="primary">truA</name>
    <name type="ordered locus">Cj0827</name>
</gene>
<organism>
    <name type="scientific">Campylobacter jejuni subsp. jejuni serotype O:2 (strain ATCC 700819 / NCTC 11168)</name>
    <dbReference type="NCBI Taxonomy" id="192222"/>
    <lineage>
        <taxon>Bacteria</taxon>
        <taxon>Pseudomonadati</taxon>
        <taxon>Campylobacterota</taxon>
        <taxon>Epsilonproteobacteria</taxon>
        <taxon>Campylobacterales</taxon>
        <taxon>Campylobacteraceae</taxon>
        <taxon>Campylobacter</taxon>
    </lineage>
</organism>
<comment type="function">
    <text evidence="1">Formation of pseudouridine at positions 38, 39 and 40 in the anticodon stem and loop of transfer RNAs.</text>
</comment>
<comment type="catalytic activity">
    <reaction evidence="1">
        <text>uridine(38/39/40) in tRNA = pseudouridine(38/39/40) in tRNA</text>
        <dbReference type="Rhea" id="RHEA:22376"/>
        <dbReference type="Rhea" id="RHEA-COMP:10085"/>
        <dbReference type="Rhea" id="RHEA-COMP:10087"/>
        <dbReference type="ChEBI" id="CHEBI:65314"/>
        <dbReference type="ChEBI" id="CHEBI:65315"/>
        <dbReference type="EC" id="5.4.99.12"/>
    </reaction>
</comment>
<comment type="subunit">
    <text evidence="1">Homodimer.</text>
</comment>
<comment type="similarity">
    <text evidence="1">Belongs to the tRNA pseudouridine synthase TruA family.</text>
</comment>
<reference key="1">
    <citation type="journal article" date="2000" name="Nature">
        <title>The genome sequence of the food-borne pathogen Campylobacter jejuni reveals hypervariable sequences.</title>
        <authorList>
            <person name="Parkhill J."/>
            <person name="Wren B.W."/>
            <person name="Mungall K.L."/>
            <person name="Ketley J.M."/>
            <person name="Churcher C.M."/>
            <person name="Basham D."/>
            <person name="Chillingworth T."/>
            <person name="Davies R.M."/>
            <person name="Feltwell T."/>
            <person name="Holroyd S."/>
            <person name="Jagels K."/>
            <person name="Karlyshev A.V."/>
            <person name="Moule S."/>
            <person name="Pallen M.J."/>
            <person name="Penn C.W."/>
            <person name="Quail M.A."/>
            <person name="Rajandream M.A."/>
            <person name="Rutherford K.M."/>
            <person name="van Vliet A.H.M."/>
            <person name="Whitehead S."/>
            <person name="Barrell B.G."/>
        </authorList>
    </citation>
    <scope>NUCLEOTIDE SEQUENCE [LARGE SCALE GENOMIC DNA]</scope>
    <source>
        <strain>ATCC 700819 / NCTC 11168</strain>
    </source>
</reference>
<proteinExistence type="inferred from homology"/>
<accession>Q9PP96</accession>
<accession>Q0PA63</accession>
<protein>
    <recommendedName>
        <fullName evidence="1">tRNA pseudouridine synthase A</fullName>
        <ecNumber evidence="1">5.4.99.12</ecNumber>
    </recommendedName>
    <alternativeName>
        <fullName evidence="1">tRNA pseudouridine(38-40) synthase</fullName>
    </alternativeName>
    <alternativeName>
        <fullName evidence="1">tRNA pseudouridylate synthase I</fullName>
    </alternativeName>
    <alternativeName>
        <fullName evidence="1">tRNA-uridine isomerase I</fullName>
    </alternativeName>
</protein>
<sequence length="241" mass="27587">MMKIKIIFSYDGSAFLGSATQPHKKGVQDALSGALSHLGIFSPLLMASRTDKGVHASYAVASVECGDYFTNLEYLQKQLNKFSHPFIHIKKIEKVKDDFEVRFDVKSREYRYIFSHASYSPFMASYVHFYPKFDLGKANELLGFFVGKKDLKFFCKSGGDNKTTLREIFIARAYAYKDFSIFHFKANGFLRGQIRLSVASVLKVLEGKMSEKELKEQIEAKKQYNHFLAPPNGLYLSRICY</sequence>
<dbReference type="EC" id="5.4.99.12" evidence="1"/>
<dbReference type="EMBL" id="AL111168">
    <property type="protein sequence ID" value="CAL34955.1"/>
    <property type="molecule type" value="Genomic_DNA"/>
</dbReference>
<dbReference type="PIR" id="C81355">
    <property type="entry name" value="C81355"/>
</dbReference>
<dbReference type="RefSeq" id="WP_002852636.1">
    <property type="nucleotide sequence ID" value="NZ_SZUC01000001.1"/>
</dbReference>
<dbReference type="RefSeq" id="YP_002344234.1">
    <property type="nucleotide sequence ID" value="NC_002163.1"/>
</dbReference>
<dbReference type="SMR" id="Q9PP96"/>
<dbReference type="STRING" id="192222.Cj0827"/>
<dbReference type="PaxDb" id="192222-Cj0827"/>
<dbReference type="EnsemblBacteria" id="CAL34955">
    <property type="protein sequence ID" value="CAL34955"/>
    <property type="gene ID" value="Cj0827"/>
</dbReference>
<dbReference type="GeneID" id="904389"/>
<dbReference type="KEGG" id="cje:Cj0827"/>
<dbReference type="PATRIC" id="fig|192222.6.peg.815"/>
<dbReference type="eggNOG" id="COG0101">
    <property type="taxonomic scope" value="Bacteria"/>
</dbReference>
<dbReference type="HOGENOM" id="CLU_014673_0_1_7"/>
<dbReference type="OrthoDB" id="9811823at2"/>
<dbReference type="Proteomes" id="UP000000799">
    <property type="component" value="Chromosome"/>
</dbReference>
<dbReference type="GO" id="GO:0003723">
    <property type="term" value="F:RNA binding"/>
    <property type="evidence" value="ECO:0007669"/>
    <property type="project" value="InterPro"/>
</dbReference>
<dbReference type="GO" id="GO:0160147">
    <property type="term" value="F:tRNA pseudouridine(38-40) synthase activity"/>
    <property type="evidence" value="ECO:0007669"/>
    <property type="project" value="UniProtKB-EC"/>
</dbReference>
<dbReference type="GO" id="GO:0031119">
    <property type="term" value="P:tRNA pseudouridine synthesis"/>
    <property type="evidence" value="ECO:0007669"/>
    <property type="project" value="UniProtKB-UniRule"/>
</dbReference>
<dbReference type="CDD" id="cd02570">
    <property type="entry name" value="PseudoU_synth_EcTruA"/>
    <property type="match status" value="1"/>
</dbReference>
<dbReference type="Gene3D" id="3.30.70.660">
    <property type="entry name" value="Pseudouridine synthase I, catalytic domain, C-terminal subdomain"/>
    <property type="match status" value="1"/>
</dbReference>
<dbReference type="Gene3D" id="3.30.70.580">
    <property type="entry name" value="Pseudouridine synthase I, catalytic domain, N-terminal subdomain"/>
    <property type="match status" value="1"/>
</dbReference>
<dbReference type="HAMAP" id="MF_00171">
    <property type="entry name" value="TruA"/>
    <property type="match status" value="1"/>
</dbReference>
<dbReference type="InterPro" id="IPR020103">
    <property type="entry name" value="PsdUridine_synth_cat_dom_sf"/>
</dbReference>
<dbReference type="InterPro" id="IPR001406">
    <property type="entry name" value="PsdUridine_synth_TruA"/>
</dbReference>
<dbReference type="InterPro" id="IPR020097">
    <property type="entry name" value="PsdUridine_synth_TruA_a/b_dom"/>
</dbReference>
<dbReference type="InterPro" id="IPR020095">
    <property type="entry name" value="PsdUridine_synth_TruA_C"/>
</dbReference>
<dbReference type="InterPro" id="IPR020094">
    <property type="entry name" value="TruA/RsuA/RluB/E/F_N"/>
</dbReference>
<dbReference type="NCBIfam" id="TIGR00071">
    <property type="entry name" value="hisT_truA"/>
    <property type="match status" value="1"/>
</dbReference>
<dbReference type="PANTHER" id="PTHR11142">
    <property type="entry name" value="PSEUDOURIDYLATE SYNTHASE"/>
    <property type="match status" value="1"/>
</dbReference>
<dbReference type="PANTHER" id="PTHR11142:SF0">
    <property type="entry name" value="TRNA PSEUDOURIDINE SYNTHASE-LIKE 1"/>
    <property type="match status" value="1"/>
</dbReference>
<dbReference type="Pfam" id="PF01416">
    <property type="entry name" value="PseudoU_synth_1"/>
    <property type="match status" value="2"/>
</dbReference>
<dbReference type="PIRSF" id="PIRSF001430">
    <property type="entry name" value="tRNA_psdUrid_synth"/>
    <property type="match status" value="1"/>
</dbReference>
<dbReference type="SUPFAM" id="SSF55120">
    <property type="entry name" value="Pseudouridine synthase"/>
    <property type="match status" value="1"/>
</dbReference>
<evidence type="ECO:0000255" key="1">
    <source>
        <dbReference type="HAMAP-Rule" id="MF_00171"/>
    </source>
</evidence>
<name>TRUA_CAMJE</name>
<feature type="chain" id="PRO_0000057354" description="tRNA pseudouridine synthase A">
    <location>
        <begin position="1"/>
        <end position="241"/>
    </location>
</feature>
<feature type="active site" description="Nucleophile" evidence="1">
    <location>
        <position position="51"/>
    </location>
</feature>
<feature type="binding site" evidence="1">
    <location>
        <position position="110"/>
    </location>
    <ligand>
        <name>substrate</name>
    </ligand>
</feature>